<protein>
    <recommendedName>
        <fullName>CBL-interacting protein kinase 15</fullName>
        <ecNumber>2.7.11.1</ecNumber>
    </recommendedName>
    <alternativeName>
        <fullName>OsCIPK15</fullName>
    </alternativeName>
</protein>
<comment type="function">
    <text evidence="5">Involved in salt stress tolerance. CIPK serine-threonine protein kinases interact with CBL proteins. Binding of a CBL protein to the regulatory NAF domain of CIPK protein lead to the activation of the kinase in a calcium-dependent manner.</text>
</comment>
<comment type="catalytic activity">
    <reaction>
        <text>L-seryl-[protein] + ATP = O-phospho-L-seryl-[protein] + ADP + H(+)</text>
        <dbReference type="Rhea" id="RHEA:17989"/>
        <dbReference type="Rhea" id="RHEA-COMP:9863"/>
        <dbReference type="Rhea" id="RHEA-COMP:11604"/>
        <dbReference type="ChEBI" id="CHEBI:15378"/>
        <dbReference type="ChEBI" id="CHEBI:29999"/>
        <dbReference type="ChEBI" id="CHEBI:30616"/>
        <dbReference type="ChEBI" id="CHEBI:83421"/>
        <dbReference type="ChEBI" id="CHEBI:456216"/>
        <dbReference type="EC" id="2.7.11.1"/>
    </reaction>
</comment>
<comment type="catalytic activity">
    <reaction>
        <text>L-threonyl-[protein] + ATP = O-phospho-L-threonyl-[protein] + ADP + H(+)</text>
        <dbReference type="Rhea" id="RHEA:46608"/>
        <dbReference type="Rhea" id="RHEA-COMP:11060"/>
        <dbReference type="Rhea" id="RHEA-COMP:11605"/>
        <dbReference type="ChEBI" id="CHEBI:15378"/>
        <dbReference type="ChEBI" id="CHEBI:30013"/>
        <dbReference type="ChEBI" id="CHEBI:30616"/>
        <dbReference type="ChEBI" id="CHEBI:61977"/>
        <dbReference type="ChEBI" id="CHEBI:456216"/>
        <dbReference type="EC" id="2.7.11.1"/>
    </reaction>
</comment>
<comment type="cofactor">
    <cofactor evidence="1">
        <name>Mn(2+)</name>
        <dbReference type="ChEBI" id="CHEBI:29035"/>
    </cofactor>
</comment>
<comment type="induction">
    <text evidence="5">By drought and salt stresses and abscisic acid (ABA).</text>
</comment>
<comment type="domain">
    <text evidence="1">The activation loop within the kinase domain is the target of phosphorylation/activation by upstream protein kinases. The PPI motif mediates the interaction with the ABI (abscisic acid-insensitive) phosphatases (By similarity).</text>
</comment>
<comment type="similarity">
    <text evidence="6">Belongs to the protein kinase superfamily. CAMK Ser/Thr protein kinase family. SNF1 subfamily.</text>
</comment>
<feature type="chain" id="PRO_0000338373" description="CBL-interacting protein kinase 15">
    <location>
        <begin position="1"/>
        <end position="434"/>
    </location>
</feature>
<feature type="domain" description="Protein kinase" evidence="2">
    <location>
        <begin position="12"/>
        <end position="267"/>
    </location>
</feature>
<feature type="domain" description="NAF" evidence="3">
    <location>
        <begin position="298"/>
        <end position="333"/>
    </location>
</feature>
<feature type="region of interest" description="Activation loop" evidence="1">
    <location>
        <begin position="153"/>
        <end position="182"/>
    </location>
</feature>
<feature type="region of interest" description="PPI" evidence="1">
    <location>
        <begin position="338"/>
        <end position="367"/>
    </location>
</feature>
<feature type="active site" description="Proton acceptor" evidence="2 4">
    <location>
        <position position="135"/>
    </location>
</feature>
<feature type="binding site" evidence="2">
    <location>
        <begin position="18"/>
        <end position="26"/>
    </location>
    <ligand>
        <name>ATP</name>
        <dbReference type="ChEBI" id="CHEBI:30616"/>
    </ligand>
</feature>
<feature type="binding site" evidence="2">
    <location>
        <position position="41"/>
    </location>
    <ligand>
        <name>ATP</name>
        <dbReference type="ChEBI" id="CHEBI:30616"/>
    </ligand>
</feature>
<keyword id="KW-0067">ATP-binding</keyword>
<keyword id="KW-0418">Kinase</keyword>
<keyword id="KW-0464">Manganese</keyword>
<keyword id="KW-0547">Nucleotide-binding</keyword>
<keyword id="KW-1185">Reference proteome</keyword>
<keyword id="KW-0723">Serine/threonine-protein kinase</keyword>
<keyword id="KW-0808">Transferase</keyword>
<dbReference type="EC" id="2.7.11.1"/>
<dbReference type="EMBL" id="AB264037">
    <property type="protein sequence ID" value="BAF34613.1"/>
    <property type="molecule type" value="mRNA"/>
</dbReference>
<dbReference type="EMBL" id="DP000010">
    <property type="protein sequence ID" value="ABA91173.1"/>
    <property type="molecule type" value="Genomic_DNA"/>
</dbReference>
<dbReference type="EMBL" id="AP008217">
    <property type="protein sequence ID" value="BAF27419.1"/>
    <property type="molecule type" value="Genomic_DNA"/>
</dbReference>
<dbReference type="EMBL" id="AP014967">
    <property type="protein sequence ID" value="BAT12391.1"/>
    <property type="molecule type" value="Genomic_DNA"/>
</dbReference>
<dbReference type="RefSeq" id="XP_015617455.1">
    <property type="nucleotide sequence ID" value="XM_015761969.1"/>
</dbReference>
<dbReference type="SMR" id="Q2RBF0"/>
<dbReference type="FunCoup" id="Q2RBF0">
    <property type="interactions" value="450"/>
</dbReference>
<dbReference type="STRING" id="39947.Q2RBF0"/>
<dbReference type="PaxDb" id="39947-Q2RBF0"/>
<dbReference type="EnsemblPlants" id="Os11t0113700-01">
    <property type="protein sequence ID" value="Os11t0113700-01"/>
    <property type="gene ID" value="Os11g0113700"/>
</dbReference>
<dbReference type="EnsemblPlants" id="Os11t0113700-02">
    <property type="protein sequence ID" value="Os11t0113700-02"/>
    <property type="gene ID" value="Os11g0113700"/>
</dbReference>
<dbReference type="Gramene" id="Os11t0113700-01">
    <property type="protein sequence ID" value="Os11t0113700-01"/>
    <property type="gene ID" value="Os11g0113700"/>
</dbReference>
<dbReference type="Gramene" id="Os11t0113700-02">
    <property type="protein sequence ID" value="Os11t0113700-02"/>
    <property type="gene ID" value="Os11g0113700"/>
</dbReference>
<dbReference type="KEGG" id="dosa:Os11g0113700"/>
<dbReference type="eggNOG" id="KOG0583">
    <property type="taxonomic scope" value="Eukaryota"/>
</dbReference>
<dbReference type="HOGENOM" id="CLU_000288_59_0_1"/>
<dbReference type="InParanoid" id="Q2RBF0"/>
<dbReference type="OMA" id="PCENATT"/>
<dbReference type="OrthoDB" id="541276at2759"/>
<dbReference type="Proteomes" id="UP000000763">
    <property type="component" value="Chromosome 11"/>
</dbReference>
<dbReference type="Proteomes" id="UP000059680">
    <property type="component" value="Chromosome 11"/>
</dbReference>
<dbReference type="GO" id="GO:0005524">
    <property type="term" value="F:ATP binding"/>
    <property type="evidence" value="ECO:0007669"/>
    <property type="project" value="UniProtKB-KW"/>
</dbReference>
<dbReference type="GO" id="GO:0106310">
    <property type="term" value="F:protein serine kinase activity"/>
    <property type="evidence" value="ECO:0007669"/>
    <property type="project" value="RHEA"/>
</dbReference>
<dbReference type="GO" id="GO:0004674">
    <property type="term" value="F:protein serine/threonine kinase activity"/>
    <property type="evidence" value="ECO:0000318"/>
    <property type="project" value="GO_Central"/>
</dbReference>
<dbReference type="GO" id="GO:0007165">
    <property type="term" value="P:signal transduction"/>
    <property type="evidence" value="ECO:0000318"/>
    <property type="project" value="GO_Central"/>
</dbReference>
<dbReference type="CDD" id="cd12195">
    <property type="entry name" value="CIPK_C"/>
    <property type="match status" value="1"/>
</dbReference>
<dbReference type="FunFam" id="1.10.510.10:FF:000279">
    <property type="entry name" value="Non-specific serine/threonine protein kinase"/>
    <property type="match status" value="1"/>
</dbReference>
<dbReference type="FunFam" id="3.30.200.20:FF:000096">
    <property type="entry name" value="Non-specific serine/threonine protein kinase"/>
    <property type="match status" value="1"/>
</dbReference>
<dbReference type="FunFam" id="3.30.310.80:FF:000005">
    <property type="entry name" value="Non-specific serine/threonine protein kinase"/>
    <property type="match status" value="1"/>
</dbReference>
<dbReference type="Gene3D" id="3.30.310.80">
    <property type="entry name" value="Kinase associated domain 1, KA1"/>
    <property type="match status" value="1"/>
</dbReference>
<dbReference type="Gene3D" id="3.30.200.20">
    <property type="entry name" value="Phosphorylase Kinase, domain 1"/>
    <property type="match status" value="1"/>
</dbReference>
<dbReference type="Gene3D" id="1.10.510.10">
    <property type="entry name" value="Transferase(Phosphotransferase) domain 1"/>
    <property type="match status" value="1"/>
</dbReference>
<dbReference type="InterPro" id="IPR028375">
    <property type="entry name" value="KA1/Ssp2_C"/>
</dbReference>
<dbReference type="InterPro" id="IPR011009">
    <property type="entry name" value="Kinase-like_dom_sf"/>
</dbReference>
<dbReference type="InterPro" id="IPR018451">
    <property type="entry name" value="NAF/FISL_domain"/>
</dbReference>
<dbReference type="InterPro" id="IPR004041">
    <property type="entry name" value="NAF_dom"/>
</dbReference>
<dbReference type="InterPro" id="IPR000719">
    <property type="entry name" value="Prot_kinase_dom"/>
</dbReference>
<dbReference type="InterPro" id="IPR017441">
    <property type="entry name" value="Protein_kinase_ATP_BS"/>
</dbReference>
<dbReference type="InterPro" id="IPR008271">
    <property type="entry name" value="Ser/Thr_kinase_AS"/>
</dbReference>
<dbReference type="PANTHER" id="PTHR43895">
    <property type="entry name" value="CALCIUM/CALMODULIN-DEPENDENT PROTEIN KINASE KINASE-RELATED"/>
    <property type="match status" value="1"/>
</dbReference>
<dbReference type="PANTHER" id="PTHR43895:SF84">
    <property type="entry name" value="CBL-INTERACTING PROTEIN KINASE 15"/>
    <property type="match status" value="1"/>
</dbReference>
<dbReference type="Pfam" id="PF03822">
    <property type="entry name" value="NAF"/>
    <property type="match status" value="1"/>
</dbReference>
<dbReference type="Pfam" id="PF00069">
    <property type="entry name" value="Pkinase"/>
    <property type="match status" value="1"/>
</dbReference>
<dbReference type="SMART" id="SM00220">
    <property type="entry name" value="S_TKc"/>
    <property type="match status" value="1"/>
</dbReference>
<dbReference type="SUPFAM" id="SSF103243">
    <property type="entry name" value="KA1-like"/>
    <property type="match status" value="1"/>
</dbReference>
<dbReference type="SUPFAM" id="SSF56112">
    <property type="entry name" value="Protein kinase-like (PK-like)"/>
    <property type="match status" value="1"/>
</dbReference>
<dbReference type="PROSITE" id="PS50816">
    <property type="entry name" value="NAF"/>
    <property type="match status" value="1"/>
</dbReference>
<dbReference type="PROSITE" id="PS00107">
    <property type="entry name" value="PROTEIN_KINASE_ATP"/>
    <property type="match status" value="1"/>
</dbReference>
<dbReference type="PROSITE" id="PS50011">
    <property type="entry name" value="PROTEIN_KINASE_DOM"/>
    <property type="match status" value="1"/>
</dbReference>
<dbReference type="PROSITE" id="PS00108">
    <property type="entry name" value="PROTEIN_KINASE_ST"/>
    <property type="match status" value="1"/>
</dbReference>
<sequence length="434" mass="49698">MESRGKILMERYELGRLLGKGTFGKVHYARNLESNQSVAIKMMDKQQILKVGLSEQIRREITTMRLVAHKNIVQLHEVMATRNKIYFVMEYVKGGELFEKVAKRGKLTEVVAHKYFQQLISAVDYCHSRGVYHRDLKPENLLLDENENLKVSDFGLSALSESKRQDGLLHTTCGTPAYVAPEVISKIGYDGAKSDIWSCGVILFVLVAGYLPFQGPNLMEMYRKIQHGEFRCPGWFSRKLQKLLYKIMDPNPSTRISIQKIKESTWFRKGPEENRILKERTLNENTTKNVAPVLGVRRKKNAHEDVKPMSVTNLNAFEIISFSKGFDLSGMFIVKEWRNEARFTSDKSASTIISKLEDVAKALNLRVRKKDNGVVKMQGRKEGRNGVLQFDIEIFEVTTSYHIIEMKQTSGDSLEYRQLLEEGIRPALKDIVLA</sequence>
<proteinExistence type="evidence at transcript level"/>
<accession>Q2RBF0</accession>
<accession>A0A0P0XY79</accession>
<reference key="1">
    <citation type="submission" date="2006-06" db="EMBL/GenBank/DDBJ databases">
        <title>Oryza sativa (japonica cultivar-group) CBL-interacting protein kinase mRNA.</title>
        <authorList>
            <person name="Kurusu T."/>
            <person name="Hamada J."/>
            <person name="Kuchitsu K."/>
        </authorList>
    </citation>
    <scope>NUCLEOTIDE SEQUENCE [MRNA]</scope>
    <source>
        <strain>cv. Nipponbare</strain>
    </source>
</reference>
<reference key="2">
    <citation type="journal article" date="2005" name="BMC Biol.">
        <title>The sequence of rice chromosomes 11 and 12, rich in disease resistance genes and recent gene duplications.</title>
        <authorList>
            <consortium name="The rice chromosomes 11 and 12 sequencing consortia"/>
        </authorList>
    </citation>
    <scope>NUCLEOTIDE SEQUENCE [LARGE SCALE GENOMIC DNA]</scope>
    <source>
        <strain>cv. Nipponbare</strain>
    </source>
</reference>
<reference key="3">
    <citation type="journal article" date="2005" name="Nature">
        <title>The map-based sequence of the rice genome.</title>
        <authorList>
            <consortium name="International rice genome sequencing project (IRGSP)"/>
        </authorList>
    </citation>
    <scope>NUCLEOTIDE SEQUENCE [LARGE SCALE GENOMIC DNA]</scope>
    <source>
        <strain>cv. Nipponbare</strain>
    </source>
</reference>
<reference key="4">
    <citation type="journal article" date="2008" name="Nucleic Acids Res.">
        <title>The rice annotation project database (RAP-DB): 2008 update.</title>
        <authorList>
            <consortium name="The rice annotation project (RAP)"/>
        </authorList>
    </citation>
    <scope>GENOME REANNOTATION</scope>
    <source>
        <strain>cv. Nipponbare</strain>
    </source>
</reference>
<reference key="5">
    <citation type="journal article" date="2013" name="Rice">
        <title>Improvement of the Oryza sativa Nipponbare reference genome using next generation sequence and optical map data.</title>
        <authorList>
            <person name="Kawahara Y."/>
            <person name="de la Bastide M."/>
            <person name="Hamilton J.P."/>
            <person name="Kanamori H."/>
            <person name="McCombie W.R."/>
            <person name="Ouyang S."/>
            <person name="Schwartz D.C."/>
            <person name="Tanaka T."/>
            <person name="Wu J."/>
            <person name="Zhou S."/>
            <person name="Childs K.L."/>
            <person name="Davidson R.M."/>
            <person name="Lin H."/>
            <person name="Quesada-Ocampo L."/>
            <person name="Vaillancourt B."/>
            <person name="Sakai H."/>
            <person name="Lee S.S."/>
            <person name="Kim J."/>
            <person name="Numa H."/>
            <person name="Itoh T."/>
            <person name="Buell C.R."/>
            <person name="Matsumoto T."/>
        </authorList>
    </citation>
    <scope>GENOME REANNOTATION</scope>
    <source>
        <strain>cv. Nipponbare</strain>
    </source>
</reference>
<reference key="6">
    <citation type="journal article" date="2004" name="Plant Physiol.">
        <title>Calcium sensors and their interacting protein kinases: genomics of the Arabidopsis and rice CBL-CIPK signaling networks.</title>
        <authorList>
            <person name="Kolukisaoglu U."/>
            <person name="Weinl S."/>
            <person name="Blazevic D."/>
            <person name="Batistic O."/>
            <person name="Kudla J."/>
        </authorList>
    </citation>
    <scope>GENE FAMILY</scope>
    <scope>NOMENCLATURE</scope>
</reference>
<reference key="7">
    <citation type="journal article" date="2007" name="Plant Physiol.">
        <title>Characterization of stress-responsive CIPK genes in rice for stress tolerance improvement.</title>
        <authorList>
            <person name="Xiang Y."/>
            <person name="Huang Y."/>
            <person name="Xiong L."/>
        </authorList>
    </citation>
    <scope>FUNCTION</scope>
    <scope>INDUCTION</scope>
</reference>
<gene>
    <name type="primary">CIPK15</name>
    <name type="ordered locus">Os11g0113700</name>
    <name type="ordered locus">LOC_Os11g02240</name>
</gene>
<name>CIPKF_ORYSJ</name>
<evidence type="ECO:0000250" key="1"/>
<evidence type="ECO:0000255" key="2">
    <source>
        <dbReference type="PROSITE-ProRule" id="PRU00159"/>
    </source>
</evidence>
<evidence type="ECO:0000255" key="3">
    <source>
        <dbReference type="PROSITE-ProRule" id="PRU00256"/>
    </source>
</evidence>
<evidence type="ECO:0000255" key="4">
    <source>
        <dbReference type="PROSITE-ProRule" id="PRU10027"/>
    </source>
</evidence>
<evidence type="ECO:0000269" key="5">
    <source>
    </source>
</evidence>
<evidence type="ECO:0000305" key="6"/>
<organism>
    <name type="scientific">Oryza sativa subsp. japonica</name>
    <name type="common">Rice</name>
    <dbReference type="NCBI Taxonomy" id="39947"/>
    <lineage>
        <taxon>Eukaryota</taxon>
        <taxon>Viridiplantae</taxon>
        <taxon>Streptophyta</taxon>
        <taxon>Embryophyta</taxon>
        <taxon>Tracheophyta</taxon>
        <taxon>Spermatophyta</taxon>
        <taxon>Magnoliopsida</taxon>
        <taxon>Liliopsida</taxon>
        <taxon>Poales</taxon>
        <taxon>Poaceae</taxon>
        <taxon>BOP clade</taxon>
        <taxon>Oryzoideae</taxon>
        <taxon>Oryzeae</taxon>
        <taxon>Oryzinae</taxon>
        <taxon>Oryza</taxon>
        <taxon>Oryza sativa</taxon>
    </lineage>
</organism>